<reference key="1">
    <citation type="submission" date="2008-08" db="EMBL/GenBank/DDBJ databases">
        <title>Complete sequence of Anaeromyxobacter sp. K.</title>
        <authorList>
            <consortium name="US DOE Joint Genome Institute"/>
            <person name="Lucas S."/>
            <person name="Copeland A."/>
            <person name="Lapidus A."/>
            <person name="Glavina del Rio T."/>
            <person name="Dalin E."/>
            <person name="Tice H."/>
            <person name="Bruce D."/>
            <person name="Goodwin L."/>
            <person name="Pitluck S."/>
            <person name="Saunders E."/>
            <person name="Brettin T."/>
            <person name="Detter J.C."/>
            <person name="Han C."/>
            <person name="Larimer F."/>
            <person name="Land M."/>
            <person name="Hauser L."/>
            <person name="Kyrpides N."/>
            <person name="Ovchinnikiva G."/>
            <person name="Beliaev A."/>
        </authorList>
    </citation>
    <scope>NUCLEOTIDE SEQUENCE [LARGE SCALE GENOMIC DNA]</scope>
    <source>
        <strain>K</strain>
    </source>
</reference>
<keyword id="KW-0687">Ribonucleoprotein</keyword>
<keyword id="KW-0689">Ribosomal protein</keyword>
<keyword id="KW-0694">RNA-binding</keyword>
<keyword id="KW-0699">rRNA-binding</keyword>
<proteinExistence type="inferred from homology"/>
<dbReference type="EMBL" id="CP001131">
    <property type="protein sequence ID" value="ACG73177.1"/>
    <property type="molecule type" value="Genomic_DNA"/>
</dbReference>
<dbReference type="RefSeq" id="WP_012525983.1">
    <property type="nucleotide sequence ID" value="NC_011145.1"/>
</dbReference>
<dbReference type="SMR" id="B4UBB5"/>
<dbReference type="KEGG" id="ank:AnaeK_1949"/>
<dbReference type="HOGENOM" id="CLU_098841_0_1_7"/>
<dbReference type="OrthoDB" id="9810939at2"/>
<dbReference type="Proteomes" id="UP000001871">
    <property type="component" value="Chromosome"/>
</dbReference>
<dbReference type="GO" id="GO:0022625">
    <property type="term" value="C:cytosolic large ribosomal subunit"/>
    <property type="evidence" value="ECO:0007669"/>
    <property type="project" value="TreeGrafter"/>
</dbReference>
<dbReference type="GO" id="GO:0008097">
    <property type="term" value="F:5S rRNA binding"/>
    <property type="evidence" value="ECO:0007669"/>
    <property type="project" value="TreeGrafter"/>
</dbReference>
<dbReference type="GO" id="GO:0003735">
    <property type="term" value="F:structural constituent of ribosome"/>
    <property type="evidence" value="ECO:0007669"/>
    <property type="project" value="InterPro"/>
</dbReference>
<dbReference type="GO" id="GO:0006412">
    <property type="term" value="P:translation"/>
    <property type="evidence" value="ECO:0007669"/>
    <property type="project" value="UniProtKB-UniRule"/>
</dbReference>
<dbReference type="CDD" id="cd00432">
    <property type="entry name" value="Ribosomal_L18_L5e"/>
    <property type="match status" value="1"/>
</dbReference>
<dbReference type="FunFam" id="3.30.420.100:FF:000001">
    <property type="entry name" value="50S ribosomal protein L18"/>
    <property type="match status" value="1"/>
</dbReference>
<dbReference type="Gene3D" id="3.30.420.100">
    <property type="match status" value="1"/>
</dbReference>
<dbReference type="HAMAP" id="MF_01337_B">
    <property type="entry name" value="Ribosomal_uL18_B"/>
    <property type="match status" value="1"/>
</dbReference>
<dbReference type="InterPro" id="IPR004389">
    <property type="entry name" value="Ribosomal_uL18_bac-type"/>
</dbReference>
<dbReference type="InterPro" id="IPR005484">
    <property type="entry name" value="Ribosomal_uL18_bac/euk"/>
</dbReference>
<dbReference type="NCBIfam" id="TIGR00060">
    <property type="entry name" value="L18_bact"/>
    <property type="match status" value="1"/>
</dbReference>
<dbReference type="PANTHER" id="PTHR12899">
    <property type="entry name" value="39S RIBOSOMAL PROTEIN L18, MITOCHONDRIAL"/>
    <property type="match status" value="1"/>
</dbReference>
<dbReference type="PANTHER" id="PTHR12899:SF3">
    <property type="entry name" value="LARGE RIBOSOMAL SUBUNIT PROTEIN UL18M"/>
    <property type="match status" value="1"/>
</dbReference>
<dbReference type="Pfam" id="PF00861">
    <property type="entry name" value="Ribosomal_L18p"/>
    <property type="match status" value="1"/>
</dbReference>
<dbReference type="SUPFAM" id="SSF53137">
    <property type="entry name" value="Translational machinery components"/>
    <property type="match status" value="1"/>
</dbReference>
<comment type="function">
    <text evidence="1">This is one of the proteins that bind and probably mediate the attachment of the 5S RNA into the large ribosomal subunit, where it forms part of the central protuberance.</text>
</comment>
<comment type="subunit">
    <text evidence="1">Part of the 50S ribosomal subunit; part of the 5S rRNA/L5/L18/L25 subcomplex. Contacts the 5S and 23S rRNAs.</text>
</comment>
<comment type="similarity">
    <text evidence="1">Belongs to the universal ribosomal protein uL18 family.</text>
</comment>
<feature type="chain" id="PRO_1000142614" description="Large ribosomal subunit protein uL18">
    <location>
        <begin position="1"/>
        <end position="119"/>
    </location>
</feature>
<sequence>MAKHVTTREKRRARIRRKISGTELRPRLTIYKSLKHMYAQLVDDVAGKTLVSVATTSKSLKGELGDEDKTAAAKKVGEALAKAAKAKGIEQVVFDRNGFDYHGRVEAVAAAAREAGLKF</sequence>
<gene>
    <name evidence="1" type="primary">rplR</name>
    <name type="ordered locus">AnaeK_1949</name>
</gene>
<organism>
    <name type="scientific">Anaeromyxobacter sp. (strain K)</name>
    <dbReference type="NCBI Taxonomy" id="447217"/>
    <lineage>
        <taxon>Bacteria</taxon>
        <taxon>Pseudomonadati</taxon>
        <taxon>Myxococcota</taxon>
        <taxon>Myxococcia</taxon>
        <taxon>Myxococcales</taxon>
        <taxon>Cystobacterineae</taxon>
        <taxon>Anaeromyxobacteraceae</taxon>
        <taxon>Anaeromyxobacter</taxon>
    </lineage>
</organism>
<name>RL18_ANASK</name>
<protein>
    <recommendedName>
        <fullName evidence="1">Large ribosomal subunit protein uL18</fullName>
    </recommendedName>
    <alternativeName>
        <fullName evidence="2">50S ribosomal protein L18</fullName>
    </alternativeName>
</protein>
<accession>B4UBB5</accession>
<evidence type="ECO:0000255" key="1">
    <source>
        <dbReference type="HAMAP-Rule" id="MF_01337"/>
    </source>
</evidence>
<evidence type="ECO:0000305" key="2"/>